<evidence type="ECO:0000255" key="1">
    <source>
        <dbReference type="HAMAP-Rule" id="MF_00281"/>
    </source>
</evidence>
<sequence>MQLEQIVEQAESAIAAADSPTALDEVRVEYMGKKGQLTELLKGLGKLDPSERREAGQKINEAKQQVQTSINARKELLKAAELAQKLEAERIDVTLPGRHSAVGGVHPVTQTIRRIEQFFGDLGFSVKEGPEVEDGFHNFDALNIPANHPARADHDTFYFTPSTMLRTQTSGVQIRTMENEKPPLRIISPGRVYRNDYDQTHTPMFHQVEGLMVDTDVSFTQLKGILEDFLNHFFEESLTVRFRPSYFPFTEPSAEVDVMGKDGKWLEVLGCGMVHPNVLKAVGIDSEKYTGFAFGMGVERLTMLRYGVNDLRAFFENDLRFLKQFN</sequence>
<proteinExistence type="inferred from homology"/>
<comment type="catalytic activity">
    <reaction evidence="1">
        <text>tRNA(Phe) + L-phenylalanine + ATP = L-phenylalanyl-tRNA(Phe) + AMP + diphosphate + H(+)</text>
        <dbReference type="Rhea" id="RHEA:19413"/>
        <dbReference type="Rhea" id="RHEA-COMP:9668"/>
        <dbReference type="Rhea" id="RHEA-COMP:9699"/>
        <dbReference type="ChEBI" id="CHEBI:15378"/>
        <dbReference type="ChEBI" id="CHEBI:30616"/>
        <dbReference type="ChEBI" id="CHEBI:33019"/>
        <dbReference type="ChEBI" id="CHEBI:58095"/>
        <dbReference type="ChEBI" id="CHEBI:78442"/>
        <dbReference type="ChEBI" id="CHEBI:78531"/>
        <dbReference type="ChEBI" id="CHEBI:456215"/>
        <dbReference type="EC" id="6.1.1.20"/>
    </reaction>
</comment>
<comment type="cofactor">
    <cofactor evidence="1">
        <name>Mg(2+)</name>
        <dbReference type="ChEBI" id="CHEBI:18420"/>
    </cofactor>
    <text evidence="1">Binds 2 magnesium ions per tetramer.</text>
</comment>
<comment type="subunit">
    <text evidence="1">Tetramer of two alpha and two beta subunits.</text>
</comment>
<comment type="subcellular location">
    <subcellularLocation>
        <location evidence="1">Cytoplasm</location>
    </subcellularLocation>
</comment>
<comment type="similarity">
    <text evidence="1">Belongs to the class-II aminoacyl-tRNA synthetase family. Phe-tRNA synthetase alpha subunit type 1 subfamily.</text>
</comment>
<dbReference type="EC" id="6.1.1.20" evidence="1"/>
<dbReference type="EMBL" id="AE017340">
    <property type="protein sequence ID" value="AAV82235.1"/>
    <property type="molecule type" value="Genomic_DNA"/>
</dbReference>
<dbReference type="RefSeq" id="WP_011234641.1">
    <property type="nucleotide sequence ID" value="NC_006512.1"/>
</dbReference>
<dbReference type="SMR" id="Q5QXL7"/>
<dbReference type="STRING" id="283942.IL1395"/>
<dbReference type="GeneID" id="78251954"/>
<dbReference type="KEGG" id="ilo:IL1395"/>
<dbReference type="eggNOG" id="COG0016">
    <property type="taxonomic scope" value="Bacteria"/>
</dbReference>
<dbReference type="HOGENOM" id="CLU_025086_0_1_6"/>
<dbReference type="OrthoDB" id="9800719at2"/>
<dbReference type="Proteomes" id="UP000001171">
    <property type="component" value="Chromosome"/>
</dbReference>
<dbReference type="GO" id="GO:0005737">
    <property type="term" value="C:cytoplasm"/>
    <property type="evidence" value="ECO:0007669"/>
    <property type="project" value="UniProtKB-SubCell"/>
</dbReference>
<dbReference type="GO" id="GO:0005524">
    <property type="term" value="F:ATP binding"/>
    <property type="evidence" value="ECO:0007669"/>
    <property type="project" value="UniProtKB-UniRule"/>
</dbReference>
<dbReference type="GO" id="GO:0000287">
    <property type="term" value="F:magnesium ion binding"/>
    <property type="evidence" value="ECO:0007669"/>
    <property type="project" value="UniProtKB-UniRule"/>
</dbReference>
<dbReference type="GO" id="GO:0004826">
    <property type="term" value="F:phenylalanine-tRNA ligase activity"/>
    <property type="evidence" value="ECO:0007669"/>
    <property type="project" value="UniProtKB-UniRule"/>
</dbReference>
<dbReference type="GO" id="GO:0000049">
    <property type="term" value="F:tRNA binding"/>
    <property type="evidence" value="ECO:0007669"/>
    <property type="project" value="InterPro"/>
</dbReference>
<dbReference type="GO" id="GO:0006432">
    <property type="term" value="P:phenylalanyl-tRNA aminoacylation"/>
    <property type="evidence" value="ECO:0007669"/>
    <property type="project" value="UniProtKB-UniRule"/>
</dbReference>
<dbReference type="CDD" id="cd00496">
    <property type="entry name" value="PheRS_alpha_core"/>
    <property type="match status" value="1"/>
</dbReference>
<dbReference type="FunFam" id="3.30.930.10:FF:000003">
    <property type="entry name" value="Phenylalanine--tRNA ligase alpha subunit"/>
    <property type="match status" value="1"/>
</dbReference>
<dbReference type="Gene3D" id="3.30.930.10">
    <property type="entry name" value="Bira Bifunctional Protein, Domain 2"/>
    <property type="match status" value="1"/>
</dbReference>
<dbReference type="HAMAP" id="MF_00281">
    <property type="entry name" value="Phe_tRNA_synth_alpha1"/>
    <property type="match status" value="1"/>
</dbReference>
<dbReference type="InterPro" id="IPR006195">
    <property type="entry name" value="aa-tRNA-synth_II"/>
</dbReference>
<dbReference type="InterPro" id="IPR045864">
    <property type="entry name" value="aa-tRNA-synth_II/BPL/LPL"/>
</dbReference>
<dbReference type="InterPro" id="IPR004529">
    <property type="entry name" value="Phe-tRNA-synth_IIc_asu"/>
</dbReference>
<dbReference type="InterPro" id="IPR004188">
    <property type="entry name" value="Phe-tRNA_ligase_II_N"/>
</dbReference>
<dbReference type="InterPro" id="IPR022911">
    <property type="entry name" value="Phe_tRNA_ligase_alpha1_bac"/>
</dbReference>
<dbReference type="InterPro" id="IPR002319">
    <property type="entry name" value="Phenylalanyl-tRNA_Synthase"/>
</dbReference>
<dbReference type="InterPro" id="IPR010978">
    <property type="entry name" value="tRNA-bd_arm"/>
</dbReference>
<dbReference type="NCBIfam" id="TIGR00468">
    <property type="entry name" value="pheS"/>
    <property type="match status" value="1"/>
</dbReference>
<dbReference type="PANTHER" id="PTHR11538:SF41">
    <property type="entry name" value="PHENYLALANINE--TRNA LIGASE, MITOCHONDRIAL"/>
    <property type="match status" value="1"/>
</dbReference>
<dbReference type="PANTHER" id="PTHR11538">
    <property type="entry name" value="PHENYLALANYL-TRNA SYNTHETASE"/>
    <property type="match status" value="1"/>
</dbReference>
<dbReference type="Pfam" id="PF02912">
    <property type="entry name" value="Phe_tRNA-synt_N"/>
    <property type="match status" value="1"/>
</dbReference>
<dbReference type="Pfam" id="PF01409">
    <property type="entry name" value="tRNA-synt_2d"/>
    <property type="match status" value="1"/>
</dbReference>
<dbReference type="SUPFAM" id="SSF55681">
    <property type="entry name" value="Class II aaRS and biotin synthetases"/>
    <property type="match status" value="1"/>
</dbReference>
<dbReference type="SUPFAM" id="SSF46589">
    <property type="entry name" value="tRNA-binding arm"/>
    <property type="match status" value="1"/>
</dbReference>
<dbReference type="PROSITE" id="PS50862">
    <property type="entry name" value="AA_TRNA_LIGASE_II"/>
    <property type="match status" value="1"/>
</dbReference>
<keyword id="KW-0030">Aminoacyl-tRNA synthetase</keyword>
<keyword id="KW-0067">ATP-binding</keyword>
<keyword id="KW-0963">Cytoplasm</keyword>
<keyword id="KW-0436">Ligase</keyword>
<keyword id="KW-0460">Magnesium</keyword>
<keyword id="KW-0479">Metal-binding</keyword>
<keyword id="KW-0547">Nucleotide-binding</keyword>
<keyword id="KW-0648">Protein biosynthesis</keyword>
<keyword id="KW-1185">Reference proteome</keyword>
<gene>
    <name evidence="1" type="primary">pheS</name>
    <name type="ordered locus">IL1395</name>
</gene>
<protein>
    <recommendedName>
        <fullName evidence="1">Phenylalanine--tRNA ligase alpha subunit</fullName>
        <ecNumber evidence="1">6.1.1.20</ecNumber>
    </recommendedName>
    <alternativeName>
        <fullName evidence="1">Phenylalanyl-tRNA synthetase alpha subunit</fullName>
        <shortName evidence="1">PheRS</shortName>
    </alternativeName>
</protein>
<organism>
    <name type="scientific">Idiomarina loihiensis (strain ATCC BAA-735 / DSM 15497 / L2-TR)</name>
    <dbReference type="NCBI Taxonomy" id="283942"/>
    <lineage>
        <taxon>Bacteria</taxon>
        <taxon>Pseudomonadati</taxon>
        <taxon>Pseudomonadota</taxon>
        <taxon>Gammaproteobacteria</taxon>
        <taxon>Alteromonadales</taxon>
        <taxon>Idiomarinaceae</taxon>
        <taxon>Idiomarina</taxon>
    </lineage>
</organism>
<name>SYFA_IDILO</name>
<accession>Q5QXL7</accession>
<feature type="chain" id="PRO_0000126716" description="Phenylalanine--tRNA ligase alpha subunit">
    <location>
        <begin position="1"/>
        <end position="326"/>
    </location>
</feature>
<feature type="binding site" evidence="1">
    <location>
        <position position="251"/>
    </location>
    <ligand>
        <name>Mg(2+)</name>
        <dbReference type="ChEBI" id="CHEBI:18420"/>
        <note>shared with beta subunit</note>
    </ligand>
</feature>
<reference key="1">
    <citation type="journal article" date="2004" name="Proc. Natl. Acad. Sci. U.S.A.">
        <title>Genome sequence of the deep-sea gamma-proteobacterium Idiomarina loihiensis reveals amino acid fermentation as a source of carbon and energy.</title>
        <authorList>
            <person name="Hou S."/>
            <person name="Saw J.H."/>
            <person name="Lee K.S."/>
            <person name="Freitas T.A."/>
            <person name="Belisle C."/>
            <person name="Kawarabayasi Y."/>
            <person name="Donachie S.P."/>
            <person name="Pikina A."/>
            <person name="Galperin M.Y."/>
            <person name="Koonin E.V."/>
            <person name="Makarova K.S."/>
            <person name="Omelchenko M.V."/>
            <person name="Sorokin A."/>
            <person name="Wolf Y.I."/>
            <person name="Li Q.X."/>
            <person name="Keum Y.S."/>
            <person name="Campbell S."/>
            <person name="Denery J."/>
            <person name="Aizawa S."/>
            <person name="Shibata S."/>
            <person name="Malahoff A."/>
            <person name="Alam M."/>
        </authorList>
    </citation>
    <scope>NUCLEOTIDE SEQUENCE [LARGE SCALE GENOMIC DNA]</scope>
    <source>
        <strain>ATCC BAA-735 / DSM 15497 / L2-TR</strain>
    </source>
</reference>